<sequence length="344" mass="37284">MSNAITMGIFWHLIGAASAACFYAPFKKVKKWSWETMWSVGGIVSWIILPWAISALLLPNFWAYYSSFSLSTLLPVFLFGAMWGIGNINYGLTMRYLGMSMGIGIAIGITLIVGTLMTPIINGNFDVLINTEGGRMTLLGVLVALIGVGIVTRAGQLKERKMGIKAEEFNLKKGLVLAVMCGIFSAGMSFAMNAAKPMHEAAAALGVDPLYVALPSYVVIMGGGAIINLGFCFIRLAKVKDLSLKADFSLAKPLIIHNVLLSALGGLMWYLQFFFYAWGHARIPAQYDYISWMLHMSFYVLCGGIVGLVLKEWNNAGRRPVTVLSLGCVVIIVAANIVGIGMAN</sequence>
<protein>
    <recommendedName>
        <fullName evidence="1">L-rhamnose-proton symporter</fullName>
    </recommendedName>
    <alternativeName>
        <fullName evidence="1">L-rhamnose-H(+) transport protein</fullName>
    </alternativeName>
</protein>
<reference key="1">
    <citation type="journal article" date="2009" name="J. Bacteriol.">
        <title>Complete genome sequence and comparative genome analysis of enteropathogenic Escherichia coli O127:H6 strain E2348/69.</title>
        <authorList>
            <person name="Iguchi A."/>
            <person name="Thomson N.R."/>
            <person name="Ogura Y."/>
            <person name="Saunders D."/>
            <person name="Ooka T."/>
            <person name="Henderson I.R."/>
            <person name="Harris D."/>
            <person name="Asadulghani M."/>
            <person name="Kurokawa K."/>
            <person name="Dean P."/>
            <person name="Kenny B."/>
            <person name="Quail M.A."/>
            <person name="Thurston S."/>
            <person name="Dougan G."/>
            <person name="Hayashi T."/>
            <person name="Parkhill J."/>
            <person name="Frankel G."/>
        </authorList>
    </citation>
    <scope>NUCLEOTIDE SEQUENCE [LARGE SCALE GENOMIC DNA]</scope>
    <source>
        <strain>E2348/69 / EPEC</strain>
    </source>
</reference>
<accession>B7UNM8</accession>
<gene>
    <name evidence="1" type="primary">rhaT</name>
    <name type="ordered locus">E2348C_4212</name>
</gene>
<comment type="function">
    <text evidence="1">Uptake of L-rhamnose across the cytoplasmic membrane with the concomitant transport of protons into the cell (symport system).</text>
</comment>
<comment type="catalytic activity">
    <reaction evidence="1">
        <text>L-rhamnopyranose(in) + H(+)(in) = L-rhamnopyranose(out) + H(+)(out)</text>
        <dbReference type="Rhea" id="RHEA:29947"/>
        <dbReference type="ChEBI" id="CHEBI:15378"/>
        <dbReference type="ChEBI" id="CHEBI:62346"/>
    </reaction>
    <physiologicalReaction direction="right-to-left" evidence="1">
        <dbReference type="Rhea" id="RHEA:29949"/>
    </physiologicalReaction>
</comment>
<comment type="subcellular location">
    <subcellularLocation>
        <location evidence="1">Cell inner membrane</location>
        <topology evidence="1">Multi-pass membrane protein</topology>
    </subcellularLocation>
</comment>
<comment type="similarity">
    <text evidence="1">Belongs to the L-rhamnose transporter (TC 2.A.7.6) family.</text>
</comment>
<keyword id="KW-0997">Cell inner membrane</keyword>
<keyword id="KW-1003">Cell membrane</keyword>
<keyword id="KW-0472">Membrane</keyword>
<keyword id="KW-1185">Reference proteome</keyword>
<keyword id="KW-0762">Sugar transport</keyword>
<keyword id="KW-0769">Symport</keyword>
<keyword id="KW-0812">Transmembrane</keyword>
<keyword id="KW-1133">Transmembrane helix</keyword>
<keyword id="KW-0813">Transport</keyword>
<organism>
    <name type="scientific">Escherichia coli O127:H6 (strain E2348/69 / EPEC)</name>
    <dbReference type="NCBI Taxonomy" id="574521"/>
    <lineage>
        <taxon>Bacteria</taxon>
        <taxon>Pseudomonadati</taxon>
        <taxon>Pseudomonadota</taxon>
        <taxon>Gammaproteobacteria</taxon>
        <taxon>Enterobacterales</taxon>
        <taxon>Enterobacteriaceae</taxon>
        <taxon>Escherichia</taxon>
    </lineage>
</organism>
<name>RHAT_ECO27</name>
<dbReference type="EMBL" id="FM180568">
    <property type="protein sequence ID" value="CAS11760.1"/>
    <property type="molecule type" value="Genomic_DNA"/>
</dbReference>
<dbReference type="RefSeq" id="WP_000063507.1">
    <property type="nucleotide sequence ID" value="NC_011601.1"/>
</dbReference>
<dbReference type="GeneID" id="75174148"/>
<dbReference type="KEGG" id="ecg:E2348C_4212"/>
<dbReference type="HOGENOM" id="CLU_066437_0_0_6"/>
<dbReference type="Proteomes" id="UP000008205">
    <property type="component" value="Chromosome"/>
</dbReference>
<dbReference type="GO" id="GO:0005886">
    <property type="term" value="C:plasma membrane"/>
    <property type="evidence" value="ECO:0007669"/>
    <property type="project" value="UniProtKB-SubCell"/>
</dbReference>
<dbReference type="GO" id="GO:0015153">
    <property type="term" value="F:rhamnose transmembrane transporter activity"/>
    <property type="evidence" value="ECO:0007669"/>
    <property type="project" value="UniProtKB-UniRule"/>
</dbReference>
<dbReference type="GO" id="GO:0015293">
    <property type="term" value="F:symporter activity"/>
    <property type="evidence" value="ECO:0007669"/>
    <property type="project" value="UniProtKB-KW"/>
</dbReference>
<dbReference type="HAMAP" id="MF_01532">
    <property type="entry name" value="RhaT"/>
    <property type="match status" value="1"/>
</dbReference>
<dbReference type="InterPro" id="IPR004673">
    <property type="entry name" value="L-rhamnose-proton_sym_RhaT"/>
</dbReference>
<dbReference type="NCBIfam" id="NF010021">
    <property type="entry name" value="PRK13499.1-1"/>
    <property type="match status" value="1"/>
</dbReference>
<dbReference type="NCBIfam" id="NF010023">
    <property type="entry name" value="PRK13499.1-3"/>
    <property type="match status" value="1"/>
</dbReference>
<dbReference type="NCBIfam" id="TIGR00776">
    <property type="entry name" value="RhaT"/>
    <property type="match status" value="1"/>
</dbReference>
<dbReference type="Pfam" id="PF06379">
    <property type="entry name" value="RhaT"/>
    <property type="match status" value="1"/>
</dbReference>
<proteinExistence type="inferred from homology"/>
<evidence type="ECO:0000255" key="1">
    <source>
        <dbReference type="HAMAP-Rule" id="MF_01532"/>
    </source>
</evidence>
<feature type="chain" id="PRO_1000185173" description="L-rhamnose-proton symporter">
    <location>
        <begin position="1"/>
        <end position="344"/>
    </location>
</feature>
<feature type="transmembrane region" description="Helical" evidence="1">
    <location>
        <begin position="4"/>
        <end position="24"/>
    </location>
</feature>
<feature type="transmembrane region" description="Helical" evidence="1">
    <location>
        <begin position="38"/>
        <end position="58"/>
    </location>
</feature>
<feature type="transmembrane region" description="Helical" evidence="1">
    <location>
        <begin position="68"/>
        <end position="88"/>
    </location>
</feature>
<feature type="transmembrane region" description="Helical" evidence="1">
    <location>
        <begin position="101"/>
        <end position="121"/>
    </location>
</feature>
<feature type="transmembrane region" description="Helical" evidence="1">
    <location>
        <begin position="137"/>
        <end position="157"/>
    </location>
</feature>
<feature type="transmembrane region" description="Helical" evidence="1">
    <location>
        <begin position="175"/>
        <end position="195"/>
    </location>
</feature>
<feature type="transmembrane region" description="Helical" evidence="1">
    <location>
        <begin position="214"/>
        <end position="234"/>
    </location>
</feature>
<feature type="transmembrane region" description="Helical" evidence="1">
    <location>
        <begin position="259"/>
        <end position="279"/>
    </location>
</feature>
<feature type="transmembrane region" description="Helical" evidence="1">
    <location>
        <begin position="290"/>
        <end position="310"/>
    </location>
</feature>
<feature type="transmembrane region" description="Helical" evidence="1">
    <location>
        <begin position="323"/>
        <end position="343"/>
    </location>
</feature>